<evidence type="ECO:0000250" key="1">
    <source>
        <dbReference type="UniProtKB" id="Q7Z3Z0"/>
    </source>
</evidence>
<evidence type="ECO:0000250" key="2">
    <source>
        <dbReference type="UniProtKB" id="Q8VCW2"/>
    </source>
</evidence>
<evidence type="ECO:0000255" key="3"/>
<evidence type="ECO:0000255" key="4">
    <source>
        <dbReference type="PROSITE-ProRule" id="PRU01188"/>
    </source>
</evidence>
<evidence type="ECO:0000256" key="5">
    <source>
        <dbReference type="SAM" id="MobiDB-lite"/>
    </source>
</evidence>
<evidence type="ECO:0000305" key="6"/>
<evidence type="ECO:0000312" key="7">
    <source>
        <dbReference type="EMBL" id="AAI19959.1"/>
    </source>
</evidence>
<accession>Q0P5J4</accession>
<name>K1C25_BOVIN</name>
<organism>
    <name type="scientific">Bos taurus</name>
    <name type="common">Bovine</name>
    <dbReference type="NCBI Taxonomy" id="9913"/>
    <lineage>
        <taxon>Eukaryota</taxon>
        <taxon>Metazoa</taxon>
        <taxon>Chordata</taxon>
        <taxon>Craniata</taxon>
        <taxon>Vertebrata</taxon>
        <taxon>Euteleostomi</taxon>
        <taxon>Mammalia</taxon>
        <taxon>Eutheria</taxon>
        <taxon>Laurasiatheria</taxon>
        <taxon>Artiodactyla</taxon>
        <taxon>Ruminantia</taxon>
        <taxon>Pecora</taxon>
        <taxon>Bovidae</taxon>
        <taxon>Bovinae</taxon>
        <taxon>Bos</taxon>
    </lineage>
</organism>
<sequence length="450" mass="49313">MSLRLPSGSRRASPRPTTGSLRLSSGGASFGAGNACSMPGIGSSFSCAFGGSSSGGNALGGNPCAGFTVNEGGLLSGNEKVTMQNLNDRLASYLENVRALEEANADLEQKIKGWYEKFGPGSCRGLDHDYSRYFPIIEDLKNQIIASTTSNANAVLQIDNARLTADDFRLKYENELALHQSVESDVNGLRRVLDEITLCRTDLEIQYETLSEELTYLKKNHKEEMQVLQCAAGGNVNVEMNAAPGVDLTVLLNNMRAEYEALAEQNRRDAEAWFNEKSASLQQQITEDVGATTSARNELTEMKRNLQTLEIELQSLLATKHSLECSLTETEGNYCAQLAQIQAQIGALEEQLHQVRTETEGQKLEYEQLLDIKVHLEKEIETYCLLIGGDDGACKSGGYKSKDYGAGNVGNQMKDPVKAIVVKKVLEEVDQRSKILTPRLHSLEEKSQSN</sequence>
<dbReference type="EMBL" id="BC119958">
    <property type="protein sequence ID" value="AAI19959.1"/>
    <property type="molecule type" value="mRNA"/>
</dbReference>
<dbReference type="RefSeq" id="NP_001068991.1">
    <property type="nucleotide sequence ID" value="NM_001075523.1"/>
</dbReference>
<dbReference type="SMR" id="Q0P5J4"/>
<dbReference type="FunCoup" id="Q0P5J4">
    <property type="interactions" value="121"/>
</dbReference>
<dbReference type="STRING" id="9913.ENSBTAP00000040707"/>
<dbReference type="PaxDb" id="9913-ENSBTAP00000040707"/>
<dbReference type="PeptideAtlas" id="Q0P5J4"/>
<dbReference type="GeneID" id="511540"/>
<dbReference type="KEGG" id="bta:511540"/>
<dbReference type="CTD" id="147183"/>
<dbReference type="VEuPathDB" id="HostDB:ENSBTAG00000030542"/>
<dbReference type="eggNOG" id="ENOG502SKJN">
    <property type="taxonomic scope" value="Eukaryota"/>
</dbReference>
<dbReference type="HOGENOM" id="CLU_012560_8_3_1"/>
<dbReference type="InParanoid" id="Q0P5J4"/>
<dbReference type="OMA" id="TGNSCGI"/>
<dbReference type="OrthoDB" id="2441647at2759"/>
<dbReference type="TreeFam" id="TF332742"/>
<dbReference type="Reactome" id="R-BTA-6805567">
    <property type="pathway name" value="Keratinization"/>
</dbReference>
<dbReference type="Reactome" id="R-BTA-6809371">
    <property type="pathway name" value="Formation of the cornified envelope"/>
</dbReference>
<dbReference type="Proteomes" id="UP000009136">
    <property type="component" value="Chromosome 19"/>
</dbReference>
<dbReference type="Bgee" id="ENSBTAG00000030542">
    <property type="expression patterns" value="Expressed in zone of skin and 15 other cell types or tissues"/>
</dbReference>
<dbReference type="GO" id="GO:0005737">
    <property type="term" value="C:cytoplasm"/>
    <property type="evidence" value="ECO:0007669"/>
    <property type="project" value="UniProtKB-SubCell"/>
</dbReference>
<dbReference type="GO" id="GO:0005856">
    <property type="term" value="C:cytoskeleton"/>
    <property type="evidence" value="ECO:0000318"/>
    <property type="project" value="GO_Central"/>
</dbReference>
<dbReference type="GO" id="GO:0005882">
    <property type="term" value="C:intermediate filament"/>
    <property type="evidence" value="ECO:0007669"/>
    <property type="project" value="UniProtKB-KW"/>
</dbReference>
<dbReference type="GO" id="GO:0046982">
    <property type="term" value="F:protein heterodimerization activity"/>
    <property type="evidence" value="ECO:0000250"/>
    <property type="project" value="UniProtKB"/>
</dbReference>
<dbReference type="GO" id="GO:0005198">
    <property type="term" value="F:structural molecule activity"/>
    <property type="evidence" value="ECO:0007669"/>
    <property type="project" value="InterPro"/>
</dbReference>
<dbReference type="GO" id="GO:0007010">
    <property type="term" value="P:cytoskeleton organization"/>
    <property type="evidence" value="ECO:0000250"/>
    <property type="project" value="UniProtKB"/>
</dbReference>
<dbReference type="GO" id="GO:0030855">
    <property type="term" value="P:epithelial cell differentiation"/>
    <property type="evidence" value="ECO:0000318"/>
    <property type="project" value="GO_Central"/>
</dbReference>
<dbReference type="GO" id="GO:0031069">
    <property type="term" value="P:hair follicle morphogenesis"/>
    <property type="evidence" value="ECO:0000318"/>
    <property type="project" value="GO_Central"/>
</dbReference>
<dbReference type="GO" id="GO:0045109">
    <property type="term" value="P:intermediate filament organization"/>
    <property type="evidence" value="ECO:0000318"/>
    <property type="project" value="GO_Central"/>
</dbReference>
<dbReference type="FunFam" id="1.20.5.1160:FF:000002">
    <property type="entry name" value="Type I keratin 10"/>
    <property type="match status" value="1"/>
</dbReference>
<dbReference type="FunFam" id="1.20.5.170:FF:000002">
    <property type="entry name" value="Type I keratin KA11"/>
    <property type="match status" value="1"/>
</dbReference>
<dbReference type="FunFam" id="1.20.5.500:FF:000001">
    <property type="entry name" value="Type II keratin 23"/>
    <property type="match status" value="1"/>
</dbReference>
<dbReference type="Gene3D" id="1.20.5.170">
    <property type="match status" value="1"/>
</dbReference>
<dbReference type="Gene3D" id="1.20.5.500">
    <property type="entry name" value="Single helix bin"/>
    <property type="match status" value="1"/>
</dbReference>
<dbReference type="Gene3D" id="1.20.5.1160">
    <property type="entry name" value="Vasodilator-stimulated phosphoprotein"/>
    <property type="match status" value="1"/>
</dbReference>
<dbReference type="InterPro" id="IPR039008">
    <property type="entry name" value="IF_rod_dom"/>
</dbReference>
<dbReference type="InterPro" id="IPR002957">
    <property type="entry name" value="Keratin_I"/>
</dbReference>
<dbReference type="PANTHER" id="PTHR23239">
    <property type="entry name" value="INTERMEDIATE FILAMENT"/>
    <property type="match status" value="1"/>
</dbReference>
<dbReference type="PANTHER" id="PTHR23239:SF160">
    <property type="entry name" value="KERATIN, TYPE I CYTOSKELETAL 25"/>
    <property type="match status" value="1"/>
</dbReference>
<dbReference type="Pfam" id="PF00038">
    <property type="entry name" value="Filament"/>
    <property type="match status" value="1"/>
</dbReference>
<dbReference type="PRINTS" id="PR01248">
    <property type="entry name" value="TYPE1KERATIN"/>
</dbReference>
<dbReference type="SMART" id="SM01391">
    <property type="entry name" value="Filament"/>
    <property type="match status" value="1"/>
</dbReference>
<dbReference type="SUPFAM" id="SSF64593">
    <property type="entry name" value="Intermediate filament protein, coiled coil region"/>
    <property type="match status" value="2"/>
</dbReference>
<dbReference type="PROSITE" id="PS51842">
    <property type="entry name" value="IF_ROD_2"/>
    <property type="match status" value="1"/>
</dbReference>
<gene>
    <name evidence="1" type="primary">KRT25</name>
</gene>
<feature type="chain" id="PRO_0000312689" description="Keratin, type I cytoskeletal 25">
    <location>
        <begin position="1"/>
        <end position="450"/>
    </location>
</feature>
<feature type="domain" description="IF rod" evidence="4">
    <location>
        <begin position="79"/>
        <end position="394"/>
    </location>
</feature>
<feature type="region of interest" description="Head" evidence="3">
    <location>
        <begin position="1"/>
        <end position="78"/>
    </location>
</feature>
<feature type="region of interest" description="Disordered" evidence="5">
    <location>
        <begin position="1"/>
        <end position="25"/>
    </location>
</feature>
<feature type="region of interest" description="Coil 1A" evidence="3">
    <location>
        <begin position="79"/>
        <end position="114"/>
    </location>
</feature>
<feature type="region of interest" description="Linker 1" evidence="3">
    <location>
        <begin position="115"/>
        <end position="136"/>
    </location>
</feature>
<feature type="region of interest" description="Coil 1B" evidence="3">
    <location>
        <begin position="137"/>
        <end position="228"/>
    </location>
</feature>
<feature type="region of interest" description="Linker 12" evidence="3">
    <location>
        <begin position="229"/>
        <end position="251"/>
    </location>
</feature>
<feature type="region of interest" description="Coil 2" evidence="3">
    <location>
        <begin position="252"/>
        <end position="390"/>
    </location>
</feature>
<feature type="region of interest" description="Tail" evidence="3">
    <location>
        <begin position="391"/>
        <end position="450"/>
    </location>
</feature>
<feature type="modified residue" description="Phosphoserine" evidence="1">
    <location>
        <position position="442"/>
    </location>
</feature>
<reference evidence="7" key="1">
    <citation type="submission" date="2006-08" db="EMBL/GenBank/DDBJ databases">
        <authorList>
            <consortium name="NIH - Mammalian Gene Collection (MGC) project"/>
        </authorList>
    </citation>
    <scope>NUCLEOTIDE SEQUENCE [LARGE SCALE MRNA]</scope>
    <source>
        <strain evidence="7">Hereford</strain>
        <tissue evidence="7">Fetal skin</tissue>
    </source>
</reference>
<protein>
    <recommendedName>
        <fullName>Keratin, type I cytoskeletal 25</fullName>
    </recommendedName>
    <alternativeName>
        <fullName>Cytokeratin-25</fullName>
        <shortName>CK-25</shortName>
    </alternativeName>
    <alternativeName>
        <fullName>Keratin-25</fullName>
        <shortName>K25</shortName>
    </alternativeName>
    <alternativeName>
        <fullName>Type I inner root sheath-specific keratin-K25irs1</fullName>
    </alternativeName>
</protein>
<keyword id="KW-0175">Coiled coil</keyword>
<keyword id="KW-0963">Cytoplasm</keyword>
<keyword id="KW-0403">Intermediate filament</keyword>
<keyword id="KW-0416">Keratin</keyword>
<keyword id="KW-0597">Phosphoprotein</keyword>
<keyword id="KW-1185">Reference proteome</keyword>
<comment type="function">
    <text evidence="1 2">Essential for the proper assembly of type I and type II keratin protein complexes and formation of keratin intermediate filaments in the inner root sheath (irs) (By similarity). Plays a role in the cytoskeleton organization (By similarity).</text>
</comment>
<comment type="subunit">
    <text evidence="1 2 6">Heterodimer of a type I and a type II keratin. Heterodimer with type II keratin KRT5 leading to the formation of keratin intermediate filament (KIF) network. Interacts with KRT6A to form filaments.</text>
</comment>
<comment type="subcellular location">
    <subcellularLocation>
        <location evidence="2">Cytoplasm</location>
    </subcellularLocation>
</comment>
<comment type="miscellaneous">
    <text evidence="6">There are two types of cytoskeletal and microfibrillar keratin: I (acidic; 40-55 kDa) and II (neutral to basic; 56-70 kDa).</text>
</comment>
<comment type="similarity">
    <text evidence="4">Belongs to the intermediate filament family.</text>
</comment>
<proteinExistence type="evidence at transcript level"/>